<dbReference type="EMBL" id="AF392451">
    <property type="protein sequence ID" value="AAL40664.1"/>
    <property type="molecule type" value="mRNA"/>
</dbReference>
<dbReference type="EMBL" id="AK304067">
    <property type="protein sequence ID" value="BAG64974.1"/>
    <property type="molecule type" value="mRNA"/>
</dbReference>
<dbReference type="EMBL" id="AC092024">
    <property type="status" value="NOT_ANNOTATED_CDS"/>
    <property type="molecule type" value="Genomic_DNA"/>
</dbReference>
<dbReference type="EMBL" id="AC094019">
    <property type="status" value="NOT_ANNOTATED_CDS"/>
    <property type="molecule type" value="Genomic_DNA"/>
</dbReference>
<dbReference type="EMBL" id="AC107620">
    <property type="status" value="NOT_ANNOTATED_CDS"/>
    <property type="molecule type" value="Genomic_DNA"/>
</dbReference>
<dbReference type="EMBL" id="AC108485">
    <property type="status" value="NOT_ANNOTATED_CDS"/>
    <property type="molecule type" value="Genomic_DNA"/>
</dbReference>
<dbReference type="EMBL" id="BC003168">
    <property type="protein sequence ID" value="AAH03168.2"/>
    <property type="molecule type" value="mRNA"/>
</dbReference>
<dbReference type="EMBL" id="AF346291">
    <property type="protein sequence ID" value="AAK31140.1"/>
    <property type="molecule type" value="mRNA"/>
</dbReference>
<dbReference type="CCDS" id="CCDS2651.1">
    <molecule id="Q9BXB5-1"/>
</dbReference>
<dbReference type="CCDS" id="CCDS54559.1">
    <molecule id="Q9BXB5-2"/>
</dbReference>
<dbReference type="RefSeq" id="NP_001167531.1">
    <molecule id="Q9BXB5-2"/>
    <property type="nucleotide sequence ID" value="NM_001174060.2"/>
</dbReference>
<dbReference type="RefSeq" id="NP_060254.2">
    <molecule id="Q9BXB5-1"/>
    <property type="nucleotide sequence ID" value="NM_017784.4"/>
</dbReference>
<dbReference type="SMR" id="Q9BXB5"/>
<dbReference type="BioGRID" id="125385">
    <property type="interactions" value="60"/>
</dbReference>
<dbReference type="ComplexPortal" id="CPX-8167">
    <property type="entry name" value="OSBPL9-OSBPL10 oxysterol-binding protein-related complex"/>
</dbReference>
<dbReference type="FunCoup" id="Q9BXB5">
    <property type="interactions" value="901"/>
</dbReference>
<dbReference type="IntAct" id="Q9BXB5">
    <property type="interactions" value="32"/>
</dbReference>
<dbReference type="STRING" id="9606.ENSP00000379804"/>
<dbReference type="SwissLipids" id="SLP:000000528"/>
<dbReference type="GlyGen" id="Q9BXB5">
    <property type="glycosylation" value="2 sites, 1 N-linked glycan (1 site), 1 O-linked glycan (1 site)"/>
</dbReference>
<dbReference type="iPTMnet" id="Q9BXB5"/>
<dbReference type="PhosphoSitePlus" id="Q9BXB5"/>
<dbReference type="SwissPalm" id="Q9BXB5"/>
<dbReference type="BioMuta" id="OSBPL10"/>
<dbReference type="DMDM" id="20139128"/>
<dbReference type="CPTAC" id="CPTAC-1625"/>
<dbReference type="jPOST" id="Q9BXB5"/>
<dbReference type="MassIVE" id="Q9BXB5"/>
<dbReference type="PaxDb" id="9606-ENSP00000379804"/>
<dbReference type="PeptideAtlas" id="Q9BXB5"/>
<dbReference type="ProteomicsDB" id="79399">
    <molecule id="Q9BXB5-1"/>
</dbReference>
<dbReference type="ProteomicsDB" id="79400">
    <molecule id="Q9BXB5-2"/>
</dbReference>
<dbReference type="Pumba" id="Q9BXB5"/>
<dbReference type="Antibodypedia" id="1161">
    <property type="antibodies" value="168 antibodies from 29 providers"/>
</dbReference>
<dbReference type="DNASU" id="114884"/>
<dbReference type="Ensembl" id="ENST00000396556.7">
    <molecule id="Q9BXB5-1"/>
    <property type="protein sequence ID" value="ENSP00000379804.2"/>
    <property type="gene ID" value="ENSG00000144645.16"/>
</dbReference>
<dbReference type="Ensembl" id="ENST00000438237.6">
    <molecule id="Q9BXB5-2"/>
    <property type="protein sequence ID" value="ENSP00000406124.2"/>
    <property type="gene ID" value="ENSG00000144645.16"/>
</dbReference>
<dbReference type="GeneID" id="114884"/>
<dbReference type="KEGG" id="hsa:114884"/>
<dbReference type="MANE-Select" id="ENST00000396556.7">
    <property type="protein sequence ID" value="ENSP00000379804.2"/>
    <property type="RefSeq nucleotide sequence ID" value="NM_017784.5"/>
    <property type="RefSeq protein sequence ID" value="NP_060254.2"/>
</dbReference>
<dbReference type="UCSC" id="uc011axf.3">
    <molecule id="Q9BXB5-1"/>
    <property type="organism name" value="human"/>
</dbReference>
<dbReference type="AGR" id="HGNC:16395"/>
<dbReference type="CTD" id="114884"/>
<dbReference type="DisGeNET" id="114884"/>
<dbReference type="GeneCards" id="OSBPL10"/>
<dbReference type="HGNC" id="HGNC:16395">
    <property type="gene designation" value="OSBPL10"/>
</dbReference>
<dbReference type="HPA" id="ENSG00000144645">
    <property type="expression patterns" value="Low tissue specificity"/>
</dbReference>
<dbReference type="MIM" id="606738">
    <property type="type" value="gene"/>
</dbReference>
<dbReference type="neXtProt" id="NX_Q9BXB5"/>
<dbReference type="OpenTargets" id="ENSG00000144645"/>
<dbReference type="PharmGKB" id="PA32824"/>
<dbReference type="VEuPathDB" id="HostDB:ENSG00000144645"/>
<dbReference type="eggNOG" id="KOG2210">
    <property type="taxonomic scope" value="Eukaryota"/>
</dbReference>
<dbReference type="GeneTree" id="ENSGT00940000157880"/>
<dbReference type="HOGENOM" id="CLU_012334_3_1_1"/>
<dbReference type="InParanoid" id="Q9BXB5"/>
<dbReference type="OMA" id="GQHHNRT"/>
<dbReference type="OrthoDB" id="48057at2759"/>
<dbReference type="PAN-GO" id="Q9BXB5">
    <property type="GO annotations" value="5 GO annotations based on evolutionary models"/>
</dbReference>
<dbReference type="PhylomeDB" id="Q9BXB5"/>
<dbReference type="TreeFam" id="TF312807"/>
<dbReference type="PathwayCommons" id="Q9BXB5"/>
<dbReference type="Reactome" id="R-HSA-1482801">
    <property type="pathway name" value="Acyl chain remodelling of PS"/>
</dbReference>
<dbReference type="SignaLink" id="Q9BXB5"/>
<dbReference type="BioGRID-ORCS" id="114884">
    <property type="hits" value="14 hits in 1151 CRISPR screens"/>
</dbReference>
<dbReference type="ChiTaRS" id="OSBPL10">
    <property type="organism name" value="human"/>
</dbReference>
<dbReference type="GenomeRNAi" id="114884"/>
<dbReference type="Pharos" id="Q9BXB5">
    <property type="development level" value="Tbio"/>
</dbReference>
<dbReference type="PRO" id="PR:Q9BXB5"/>
<dbReference type="Proteomes" id="UP000005640">
    <property type="component" value="Chromosome 3"/>
</dbReference>
<dbReference type="RNAct" id="Q9BXB5">
    <property type="molecule type" value="protein"/>
</dbReference>
<dbReference type="Bgee" id="ENSG00000144645">
    <property type="expression patterns" value="Expressed in secondary oocyte and 188 other cell types or tissues"/>
</dbReference>
<dbReference type="ExpressionAtlas" id="Q9BXB5">
    <property type="expression patterns" value="baseline and differential"/>
</dbReference>
<dbReference type="GO" id="GO:0005856">
    <property type="term" value="C:cytoskeleton"/>
    <property type="evidence" value="ECO:0007669"/>
    <property type="project" value="UniProtKB-SubCell"/>
</dbReference>
<dbReference type="GO" id="GO:0005829">
    <property type="term" value="C:cytosol"/>
    <property type="evidence" value="ECO:0000318"/>
    <property type="project" value="GO_Central"/>
</dbReference>
<dbReference type="GO" id="GO:0016020">
    <property type="term" value="C:membrane"/>
    <property type="evidence" value="ECO:0000318"/>
    <property type="project" value="GO_Central"/>
</dbReference>
<dbReference type="GO" id="GO:0015485">
    <property type="term" value="F:cholesterol binding"/>
    <property type="evidence" value="ECO:0000314"/>
    <property type="project" value="BHF-UCL"/>
</dbReference>
<dbReference type="GO" id="GO:0001786">
    <property type="term" value="F:phosphatidylserine binding"/>
    <property type="evidence" value="ECO:0000314"/>
    <property type="project" value="UniProtKB"/>
</dbReference>
<dbReference type="GO" id="GO:0005548">
    <property type="term" value="F:phospholipid transporter activity"/>
    <property type="evidence" value="ECO:0000304"/>
    <property type="project" value="Reactome"/>
</dbReference>
<dbReference type="GO" id="GO:0036150">
    <property type="term" value="P:phosphatidylserine acyl-chain remodeling"/>
    <property type="evidence" value="ECO:0000304"/>
    <property type="project" value="Reactome"/>
</dbReference>
<dbReference type="CDD" id="cd13291">
    <property type="entry name" value="PH_ORP10_ORP11"/>
    <property type="match status" value="1"/>
</dbReference>
<dbReference type="FunFam" id="1.10.287.2720:FF:000001">
    <property type="entry name" value="Oxysterol-binding OBPalpha"/>
    <property type="match status" value="1"/>
</dbReference>
<dbReference type="FunFam" id="2.30.29.30:FF:000278">
    <property type="entry name" value="Oxysterol-binding protein"/>
    <property type="match status" value="1"/>
</dbReference>
<dbReference type="FunFam" id="2.40.160.120:FF:000002">
    <property type="entry name" value="Oxysterol-binding protein"/>
    <property type="match status" value="1"/>
</dbReference>
<dbReference type="FunFam" id="3.30.70.3490:FF:000001">
    <property type="entry name" value="Oxysterol-binding protein"/>
    <property type="match status" value="1"/>
</dbReference>
<dbReference type="Gene3D" id="1.10.287.2720">
    <property type="match status" value="1"/>
</dbReference>
<dbReference type="Gene3D" id="2.40.160.120">
    <property type="match status" value="1"/>
</dbReference>
<dbReference type="Gene3D" id="3.30.70.3490">
    <property type="match status" value="1"/>
</dbReference>
<dbReference type="Gene3D" id="2.30.29.30">
    <property type="entry name" value="Pleckstrin-homology domain (PH domain)/Phosphotyrosine-binding domain (PTB)"/>
    <property type="match status" value="1"/>
</dbReference>
<dbReference type="InterPro" id="IPR037239">
    <property type="entry name" value="OSBP_sf"/>
</dbReference>
<dbReference type="InterPro" id="IPR000648">
    <property type="entry name" value="Oxysterol-bd"/>
</dbReference>
<dbReference type="InterPro" id="IPR018494">
    <property type="entry name" value="Oxysterol-bd_CS"/>
</dbReference>
<dbReference type="InterPro" id="IPR011993">
    <property type="entry name" value="PH-like_dom_sf"/>
</dbReference>
<dbReference type="InterPro" id="IPR041680">
    <property type="entry name" value="PH_8"/>
</dbReference>
<dbReference type="InterPro" id="IPR001849">
    <property type="entry name" value="PH_domain"/>
</dbReference>
<dbReference type="PANTHER" id="PTHR10972">
    <property type="entry name" value="OXYSTEROL-BINDING PROTEIN-RELATED"/>
    <property type="match status" value="1"/>
</dbReference>
<dbReference type="PANTHER" id="PTHR10972:SF47">
    <property type="entry name" value="OXYSTEROL-BINDING PROTEIN-RELATED PROTEIN 10"/>
    <property type="match status" value="1"/>
</dbReference>
<dbReference type="Pfam" id="PF01237">
    <property type="entry name" value="Oxysterol_BP"/>
    <property type="match status" value="2"/>
</dbReference>
<dbReference type="Pfam" id="PF15409">
    <property type="entry name" value="PH_8"/>
    <property type="match status" value="1"/>
</dbReference>
<dbReference type="SMART" id="SM00233">
    <property type="entry name" value="PH"/>
    <property type="match status" value="1"/>
</dbReference>
<dbReference type="SUPFAM" id="SSF144000">
    <property type="entry name" value="Oxysterol-binding protein-like"/>
    <property type="match status" value="1"/>
</dbReference>
<dbReference type="SUPFAM" id="SSF50729">
    <property type="entry name" value="PH domain-like"/>
    <property type="match status" value="1"/>
</dbReference>
<dbReference type="PROSITE" id="PS01013">
    <property type="entry name" value="OSBP"/>
    <property type="match status" value="1"/>
</dbReference>
<dbReference type="PROSITE" id="PS50003">
    <property type="entry name" value="PH_DOMAIN"/>
    <property type="match status" value="1"/>
</dbReference>
<gene>
    <name type="primary">OSBPL10</name>
    <name type="synonym">ORP10</name>
    <name type="synonym">OSBP9</name>
</gene>
<proteinExistence type="evidence at protein level"/>
<protein>
    <recommendedName>
        <fullName>Oxysterol-binding protein-related protein 10</fullName>
        <shortName>ORP-10</shortName>
        <shortName>OSBP-related protein 10</shortName>
    </recommendedName>
</protein>
<accession>Q9BXB5</accession>
<accession>B4E212</accession>
<accession>Q9BTU5</accession>
<keyword id="KW-0025">Alternative splicing</keyword>
<keyword id="KW-0175">Coiled coil</keyword>
<keyword id="KW-0963">Cytoplasm</keyword>
<keyword id="KW-0206">Cytoskeleton</keyword>
<keyword id="KW-0444">Lipid biosynthesis</keyword>
<keyword id="KW-0443">Lipid metabolism</keyword>
<keyword id="KW-0445">Lipid transport</keyword>
<keyword id="KW-0446">Lipid-binding</keyword>
<keyword id="KW-0488">Methylation</keyword>
<keyword id="KW-0597">Phosphoprotein</keyword>
<keyword id="KW-1267">Proteomics identification</keyword>
<keyword id="KW-1185">Reference proteome</keyword>
<keyword id="KW-0813">Transport</keyword>
<reference key="1">
    <citation type="journal article" date="2001" name="Genomics">
        <title>A family of 12 human genes containing oxysterol-binding domains.</title>
        <authorList>
            <person name="Jaworski C.J."/>
            <person name="Moreira E."/>
            <person name="Li A."/>
            <person name="Lee R."/>
            <person name="Rodriguez I.R."/>
        </authorList>
    </citation>
    <scope>NUCLEOTIDE SEQUENCE [MRNA] (ISOFORM 1)</scope>
</reference>
<reference key="2">
    <citation type="journal article" date="2004" name="Nat. Genet.">
        <title>Complete sequencing and characterization of 21,243 full-length human cDNAs.</title>
        <authorList>
            <person name="Ota T."/>
            <person name="Suzuki Y."/>
            <person name="Nishikawa T."/>
            <person name="Otsuki T."/>
            <person name="Sugiyama T."/>
            <person name="Irie R."/>
            <person name="Wakamatsu A."/>
            <person name="Hayashi K."/>
            <person name="Sato H."/>
            <person name="Nagai K."/>
            <person name="Kimura K."/>
            <person name="Makita H."/>
            <person name="Sekine M."/>
            <person name="Obayashi M."/>
            <person name="Nishi T."/>
            <person name="Shibahara T."/>
            <person name="Tanaka T."/>
            <person name="Ishii S."/>
            <person name="Yamamoto J."/>
            <person name="Saito K."/>
            <person name="Kawai Y."/>
            <person name="Isono Y."/>
            <person name="Nakamura Y."/>
            <person name="Nagahari K."/>
            <person name="Murakami K."/>
            <person name="Yasuda T."/>
            <person name="Iwayanagi T."/>
            <person name="Wagatsuma M."/>
            <person name="Shiratori A."/>
            <person name="Sudo H."/>
            <person name="Hosoiri T."/>
            <person name="Kaku Y."/>
            <person name="Kodaira H."/>
            <person name="Kondo H."/>
            <person name="Sugawara M."/>
            <person name="Takahashi M."/>
            <person name="Kanda K."/>
            <person name="Yokoi T."/>
            <person name="Furuya T."/>
            <person name="Kikkawa E."/>
            <person name="Omura Y."/>
            <person name="Abe K."/>
            <person name="Kamihara K."/>
            <person name="Katsuta N."/>
            <person name="Sato K."/>
            <person name="Tanikawa M."/>
            <person name="Yamazaki M."/>
            <person name="Ninomiya K."/>
            <person name="Ishibashi T."/>
            <person name="Yamashita H."/>
            <person name="Murakawa K."/>
            <person name="Fujimori K."/>
            <person name="Tanai H."/>
            <person name="Kimata M."/>
            <person name="Watanabe M."/>
            <person name="Hiraoka S."/>
            <person name="Chiba Y."/>
            <person name="Ishida S."/>
            <person name="Ono Y."/>
            <person name="Takiguchi S."/>
            <person name="Watanabe S."/>
            <person name="Yosida M."/>
            <person name="Hotuta T."/>
            <person name="Kusano J."/>
            <person name="Kanehori K."/>
            <person name="Takahashi-Fujii A."/>
            <person name="Hara H."/>
            <person name="Tanase T.-O."/>
            <person name="Nomura Y."/>
            <person name="Togiya S."/>
            <person name="Komai F."/>
            <person name="Hara R."/>
            <person name="Takeuchi K."/>
            <person name="Arita M."/>
            <person name="Imose N."/>
            <person name="Musashino K."/>
            <person name="Yuuki H."/>
            <person name="Oshima A."/>
            <person name="Sasaki N."/>
            <person name="Aotsuka S."/>
            <person name="Yoshikawa Y."/>
            <person name="Matsunawa H."/>
            <person name="Ichihara T."/>
            <person name="Shiohata N."/>
            <person name="Sano S."/>
            <person name="Moriya S."/>
            <person name="Momiyama H."/>
            <person name="Satoh N."/>
            <person name="Takami S."/>
            <person name="Terashima Y."/>
            <person name="Suzuki O."/>
            <person name="Nakagawa S."/>
            <person name="Senoh A."/>
            <person name="Mizoguchi H."/>
            <person name="Goto Y."/>
            <person name="Shimizu F."/>
            <person name="Wakebe H."/>
            <person name="Hishigaki H."/>
            <person name="Watanabe T."/>
            <person name="Sugiyama A."/>
            <person name="Takemoto M."/>
            <person name="Kawakami B."/>
            <person name="Yamazaki M."/>
            <person name="Watanabe K."/>
            <person name="Kumagai A."/>
            <person name="Itakura S."/>
            <person name="Fukuzumi Y."/>
            <person name="Fujimori Y."/>
            <person name="Komiyama M."/>
            <person name="Tashiro H."/>
            <person name="Tanigami A."/>
            <person name="Fujiwara T."/>
            <person name="Ono T."/>
            <person name="Yamada K."/>
            <person name="Fujii Y."/>
            <person name="Ozaki K."/>
            <person name="Hirao M."/>
            <person name="Ohmori Y."/>
            <person name="Kawabata A."/>
            <person name="Hikiji T."/>
            <person name="Kobatake N."/>
            <person name="Inagaki H."/>
            <person name="Ikema Y."/>
            <person name="Okamoto S."/>
            <person name="Okitani R."/>
            <person name="Kawakami T."/>
            <person name="Noguchi S."/>
            <person name="Itoh T."/>
            <person name="Shigeta K."/>
            <person name="Senba T."/>
            <person name="Matsumura K."/>
            <person name="Nakajima Y."/>
            <person name="Mizuno T."/>
            <person name="Morinaga M."/>
            <person name="Sasaki M."/>
            <person name="Togashi T."/>
            <person name="Oyama M."/>
            <person name="Hata H."/>
            <person name="Watanabe M."/>
            <person name="Komatsu T."/>
            <person name="Mizushima-Sugano J."/>
            <person name="Satoh T."/>
            <person name="Shirai Y."/>
            <person name="Takahashi Y."/>
            <person name="Nakagawa K."/>
            <person name="Okumura K."/>
            <person name="Nagase T."/>
            <person name="Nomura N."/>
            <person name="Kikuchi H."/>
            <person name="Masuho Y."/>
            <person name="Yamashita R."/>
            <person name="Nakai K."/>
            <person name="Yada T."/>
            <person name="Nakamura Y."/>
            <person name="Ohara O."/>
            <person name="Isogai T."/>
            <person name="Sugano S."/>
        </authorList>
    </citation>
    <scope>NUCLEOTIDE SEQUENCE [LARGE SCALE MRNA] (ISOFORM 2)</scope>
    <source>
        <tissue>Trachea</tissue>
    </source>
</reference>
<reference key="3">
    <citation type="journal article" date="2006" name="Nature">
        <title>The DNA sequence, annotation and analysis of human chromosome 3.</title>
        <authorList>
            <person name="Muzny D.M."/>
            <person name="Scherer S.E."/>
            <person name="Kaul R."/>
            <person name="Wang J."/>
            <person name="Yu J."/>
            <person name="Sudbrak R."/>
            <person name="Buhay C.J."/>
            <person name="Chen R."/>
            <person name="Cree A."/>
            <person name="Ding Y."/>
            <person name="Dugan-Rocha S."/>
            <person name="Gill R."/>
            <person name="Gunaratne P."/>
            <person name="Harris R.A."/>
            <person name="Hawes A.C."/>
            <person name="Hernandez J."/>
            <person name="Hodgson A.V."/>
            <person name="Hume J."/>
            <person name="Jackson A."/>
            <person name="Khan Z.M."/>
            <person name="Kovar-Smith C."/>
            <person name="Lewis L.R."/>
            <person name="Lozado R.J."/>
            <person name="Metzker M.L."/>
            <person name="Milosavljevic A."/>
            <person name="Miner G.R."/>
            <person name="Morgan M.B."/>
            <person name="Nazareth L.V."/>
            <person name="Scott G."/>
            <person name="Sodergren E."/>
            <person name="Song X.-Z."/>
            <person name="Steffen D."/>
            <person name="Wei S."/>
            <person name="Wheeler D.A."/>
            <person name="Wright M.W."/>
            <person name="Worley K.C."/>
            <person name="Yuan Y."/>
            <person name="Zhang Z."/>
            <person name="Adams C.Q."/>
            <person name="Ansari-Lari M.A."/>
            <person name="Ayele M."/>
            <person name="Brown M.J."/>
            <person name="Chen G."/>
            <person name="Chen Z."/>
            <person name="Clendenning J."/>
            <person name="Clerc-Blankenburg K.P."/>
            <person name="Chen R."/>
            <person name="Chen Z."/>
            <person name="Davis C."/>
            <person name="Delgado O."/>
            <person name="Dinh H.H."/>
            <person name="Dong W."/>
            <person name="Draper H."/>
            <person name="Ernst S."/>
            <person name="Fu G."/>
            <person name="Gonzalez-Garay M.L."/>
            <person name="Garcia D.K."/>
            <person name="Gillett W."/>
            <person name="Gu J."/>
            <person name="Hao B."/>
            <person name="Haugen E."/>
            <person name="Havlak P."/>
            <person name="He X."/>
            <person name="Hennig S."/>
            <person name="Hu S."/>
            <person name="Huang W."/>
            <person name="Jackson L.R."/>
            <person name="Jacob L.S."/>
            <person name="Kelly S.H."/>
            <person name="Kube M."/>
            <person name="Levy R."/>
            <person name="Li Z."/>
            <person name="Liu B."/>
            <person name="Liu J."/>
            <person name="Liu W."/>
            <person name="Lu J."/>
            <person name="Maheshwari M."/>
            <person name="Nguyen B.-V."/>
            <person name="Okwuonu G.O."/>
            <person name="Palmeiri A."/>
            <person name="Pasternak S."/>
            <person name="Perez L.M."/>
            <person name="Phelps K.A."/>
            <person name="Plopper F.J."/>
            <person name="Qiang B."/>
            <person name="Raymond C."/>
            <person name="Rodriguez R."/>
            <person name="Saenphimmachak C."/>
            <person name="Santibanez J."/>
            <person name="Shen H."/>
            <person name="Shen Y."/>
            <person name="Subramanian S."/>
            <person name="Tabor P.E."/>
            <person name="Verduzco D."/>
            <person name="Waldron L."/>
            <person name="Wang J."/>
            <person name="Wang J."/>
            <person name="Wang Q."/>
            <person name="Williams G.A."/>
            <person name="Wong G.K.-S."/>
            <person name="Yao Z."/>
            <person name="Zhang J."/>
            <person name="Zhang X."/>
            <person name="Zhao G."/>
            <person name="Zhou J."/>
            <person name="Zhou Y."/>
            <person name="Nelson D."/>
            <person name="Lehrach H."/>
            <person name="Reinhardt R."/>
            <person name="Naylor S.L."/>
            <person name="Yang H."/>
            <person name="Olson M."/>
            <person name="Weinstock G."/>
            <person name="Gibbs R.A."/>
        </authorList>
    </citation>
    <scope>NUCLEOTIDE SEQUENCE [LARGE SCALE GENOMIC DNA]</scope>
</reference>
<reference key="4">
    <citation type="journal article" date="2004" name="Genome Res.">
        <title>The status, quality, and expansion of the NIH full-length cDNA project: the Mammalian Gene Collection (MGC).</title>
        <authorList>
            <consortium name="The MGC Project Team"/>
        </authorList>
    </citation>
    <scope>NUCLEOTIDE SEQUENCE [LARGE SCALE MRNA] (ISOFORM 1)</scope>
    <source>
        <tissue>Skin</tissue>
    </source>
</reference>
<reference key="5">
    <citation type="journal article" date="2001" name="J. Lipid Res.">
        <title>The OSBP-related protein family in humans.</title>
        <authorList>
            <person name="Lehto M."/>
            <person name="Laitinen S."/>
            <person name="Chinetti G."/>
            <person name="Johansson M."/>
            <person name="Ehnholm C."/>
            <person name="Staels B."/>
            <person name="Ikonen E."/>
            <person name="Olkkonen V.M."/>
        </authorList>
    </citation>
    <scope>NUCLEOTIDE SEQUENCE [MRNA] OF 1-251 (ISOFORM 1)</scope>
</reference>
<reference key="6">
    <citation type="journal article" date="2006" name="Nat. Biotechnol.">
        <title>A probability-based approach for high-throughput protein phosphorylation analysis and site localization.</title>
        <authorList>
            <person name="Beausoleil S.A."/>
            <person name="Villen J."/>
            <person name="Gerber S.A."/>
            <person name="Rush J."/>
            <person name="Gygi S.P."/>
        </authorList>
    </citation>
    <scope>PHOSPHORYLATION [LARGE SCALE ANALYSIS] AT SER-64</scope>
    <scope>IDENTIFICATION BY MASS SPECTROMETRY [LARGE SCALE ANALYSIS]</scope>
    <source>
        <tissue>Cervix carcinoma</tissue>
    </source>
</reference>
<reference key="7">
    <citation type="journal article" date="2007" name="Biochem. J.">
        <title>The mammalian oxysterol-binding protein-related proteins (ORPs) bind 25-hydroxycholesterol in an evolutionarily conserved pocket.</title>
        <authorList>
            <person name="Suchanek M."/>
            <person name="Hynynen R."/>
            <person name="Wohlfahrt G."/>
            <person name="Lehto M."/>
            <person name="Johansson M."/>
            <person name="Saarinen H."/>
            <person name="Radzikowska A."/>
            <person name="Thiele C."/>
            <person name="Olkkonen V.M."/>
        </authorList>
    </citation>
    <scope>FUNCTION</scope>
    <scope>DOMAIN</scope>
</reference>
<reference key="8">
    <citation type="journal article" date="2008" name="Mol. Cell">
        <title>Kinase-selective enrichment enables quantitative phosphoproteomics of the kinome across the cell cycle.</title>
        <authorList>
            <person name="Daub H."/>
            <person name="Olsen J.V."/>
            <person name="Bairlein M."/>
            <person name="Gnad F."/>
            <person name="Oppermann F.S."/>
            <person name="Korner R."/>
            <person name="Greff Z."/>
            <person name="Keri G."/>
            <person name="Stemmann O."/>
            <person name="Mann M."/>
        </authorList>
    </citation>
    <scope>IDENTIFICATION BY MASS SPECTROMETRY [LARGE SCALE ANALYSIS]</scope>
    <source>
        <tissue>Cervix carcinoma</tissue>
    </source>
</reference>
<reference key="9">
    <citation type="journal article" date="2008" name="Proc. Natl. Acad. Sci. U.S.A.">
        <title>A quantitative atlas of mitotic phosphorylation.</title>
        <authorList>
            <person name="Dephoure N."/>
            <person name="Zhou C."/>
            <person name="Villen J."/>
            <person name="Beausoleil S.A."/>
            <person name="Bakalarski C.E."/>
            <person name="Elledge S.J."/>
            <person name="Gygi S.P."/>
        </authorList>
    </citation>
    <scope>PHOSPHORYLATION [LARGE SCALE ANALYSIS] AT SER-57; SER-60; SER-64; THR-196; SER-201 AND SER-223</scope>
    <scope>IDENTIFICATION BY MASS SPECTROMETRY [LARGE SCALE ANALYSIS]</scope>
    <source>
        <tissue>Cervix carcinoma</tissue>
    </source>
</reference>
<reference key="10">
    <citation type="journal article" date="2009" name="J. Mol. Med.">
        <title>OSBPL10, a novel candidate gene for high triglyceride trait in dyslipidemic Finnish subjects, regulates cellular lipid metabolism.</title>
        <authorList>
            <person name="Perttila J."/>
            <person name="Merikanto K."/>
            <person name="Naukkarinen J."/>
            <person name="Surakka I."/>
            <person name="Martin N.W."/>
            <person name="Tanhuanpaa K."/>
            <person name="Grimard V."/>
            <person name="Taskinen M.R."/>
            <person name="Thiele C."/>
            <person name="Salomaa V."/>
            <person name="Jula A."/>
            <person name="Perola M."/>
            <person name="Virtanen I."/>
            <person name="Peltonen L."/>
            <person name="Olkkonen V.M."/>
        </authorList>
    </citation>
    <scope>FUNCTION</scope>
    <scope>SUBCELLULAR LOCATION</scope>
</reference>
<reference key="11">
    <citation type="journal article" date="2010" name="Hypertens. Res.">
        <title>Variation in OSBPL10 is associated with dyslipidemia.</title>
        <authorList>
            <person name="Koriyama H."/>
            <person name="Nakagami H."/>
            <person name="Katsuya T."/>
            <person name="Akasaka H."/>
            <person name="Saitoh S."/>
            <person name="Shimamoto K."/>
            <person name="Ogihara T."/>
            <person name="Kaneda Y."/>
            <person name="Morishita R."/>
            <person name="Rakugi H."/>
        </authorList>
    </citation>
    <scope>POLYMORPHISM</scope>
</reference>
<reference key="12">
    <citation type="journal article" date="2010" name="J. Atheroscler. Thromb.">
        <title>Identification of evidence suggestive of an association with peripheral arterial disease at the OSBPL10 locus by genome-wide investigation in the Japanese population.</title>
        <authorList>
            <person name="Koriyama H."/>
            <person name="Nakagami H."/>
            <person name="Katsuya T."/>
            <person name="Sugimoto K."/>
            <person name="Yamashita H."/>
            <person name="Takami Y."/>
            <person name="Maeda S."/>
            <person name="Kubo M."/>
            <person name="Takahashi A."/>
            <person name="Nakamura Y."/>
            <person name="Ogihara T."/>
            <person name="Rakugi H."/>
            <person name="Kaneda Y."/>
            <person name="Morishita R."/>
        </authorList>
    </citation>
    <scope>POLYMORPHISM</scope>
</reference>
<reference key="13">
    <citation type="journal article" date="2010" name="Sci. Signal.">
        <title>Quantitative phosphoproteomics reveals widespread full phosphorylation site occupancy during mitosis.</title>
        <authorList>
            <person name="Olsen J.V."/>
            <person name="Vermeulen M."/>
            <person name="Santamaria A."/>
            <person name="Kumar C."/>
            <person name="Miller M.L."/>
            <person name="Jensen L.J."/>
            <person name="Gnad F."/>
            <person name="Cox J."/>
            <person name="Jensen T.S."/>
            <person name="Nigg E.A."/>
            <person name="Brunak S."/>
            <person name="Mann M."/>
        </authorList>
    </citation>
    <scope>PHOSPHORYLATION [LARGE SCALE ANALYSIS] AT SER-209 AND SER-223</scope>
    <scope>IDENTIFICATION BY MASS SPECTROMETRY [LARGE SCALE ANALYSIS]</scope>
    <source>
        <tissue>Cervix carcinoma</tissue>
    </source>
</reference>
<reference key="14">
    <citation type="journal article" date="2011" name="Sci. Signal.">
        <title>System-wide temporal characterization of the proteome and phosphoproteome of human embryonic stem cell differentiation.</title>
        <authorList>
            <person name="Rigbolt K.T."/>
            <person name="Prokhorova T.A."/>
            <person name="Akimov V."/>
            <person name="Henningsen J."/>
            <person name="Johansen P.T."/>
            <person name="Kratchmarova I."/>
            <person name="Kassem M."/>
            <person name="Mann M."/>
            <person name="Olsen J.V."/>
            <person name="Blagoev B."/>
        </authorList>
    </citation>
    <scope>PHOSPHORYLATION [LARGE SCALE ANALYSIS] AT SER-209</scope>
    <scope>IDENTIFICATION BY MASS SPECTROMETRY [LARGE SCALE ANALYSIS]</scope>
</reference>
<reference key="15">
    <citation type="journal article" date="2012" name="Biochim. Biophys. Acta">
        <title>ORP10, a cholesterol binding protein associated with microtubules, regulates apolipoprotein B-100 secretion.</title>
        <authorList>
            <person name="Nissila E."/>
            <person name="Ohsaki Y."/>
            <person name="Weber-Boyvat M."/>
            <person name="Perttila J."/>
            <person name="Ikonen E."/>
            <person name="Olkkonen V.M."/>
        </authorList>
    </citation>
    <scope>FUNCTION</scope>
    <scope>INTERACTION WITH OSBPL9</scope>
    <scope>SUBCELLULAR LOCATION</scope>
    <scope>DOMAIN</scope>
</reference>
<reference key="16">
    <citation type="journal article" date="2013" name="J. Proteome Res.">
        <title>Toward a comprehensive characterization of a human cancer cell phosphoproteome.</title>
        <authorList>
            <person name="Zhou H."/>
            <person name="Di Palma S."/>
            <person name="Preisinger C."/>
            <person name="Peng M."/>
            <person name="Polat A.N."/>
            <person name="Heck A.J."/>
            <person name="Mohammed S."/>
        </authorList>
    </citation>
    <scope>PHOSPHORYLATION [LARGE SCALE ANALYSIS] AT SER-30; SER-64; SER-209 AND SER-223</scope>
    <scope>IDENTIFICATION BY MASS SPECTROMETRY [LARGE SCALE ANALYSIS]</scope>
    <source>
        <tissue>Cervix carcinoma</tissue>
    </source>
</reference>
<reference key="17">
    <citation type="journal article" date="2013" name="Nature">
        <title>Interactome map uncovers phosphatidylserine transport by oxysterol-binding proteins.</title>
        <authorList>
            <person name="Maeda K."/>
            <person name="Anand K."/>
            <person name="Chiapparino A."/>
            <person name="Kumar A."/>
            <person name="Poletto M."/>
            <person name="Kaksonen M."/>
            <person name="Gavin A.C."/>
        </authorList>
    </citation>
    <scope>FUNCTION</scope>
</reference>
<reference key="18">
    <citation type="journal article" date="2013" name="Mol. Biol. Cell">
        <title>cAMP-stimulated phosphorylation of diaphanous 1 regulates protein stability and interaction with binding partners in adrenocortical cells.</title>
        <authorList>
            <person name="Li D."/>
            <person name="Dammer E.B."/>
            <person name="Lucki N.C."/>
            <person name="Sewer M.B."/>
        </authorList>
    </citation>
    <scope>IDENTIFICATION BY MASS SPECTROMETRY</scope>
    <scope>INTERACTION WITH DIAPH1</scope>
</reference>
<reference key="19">
    <citation type="journal article" date="2014" name="Mol. Cell. Proteomics">
        <title>Immunoaffinity enrichment and mass spectrometry analysis of protein methylation.</title>
        <authorList>
            <person name="Guo A."/>
            <person name="Gu H."/>
            <person name="Zhou J."/>
            <person name="Mulhern D."/>
            <person name="Wang Y."/>
            <person name="Lee K.A."/>
            <person name="Yang V."/>
            <person name="Aguiar M."/>
            <person name="Kornhauser J."/>
            <person name="Jia X."/>
            <person name="Ren J."/>
            <person name="Beausoleil S.A."/>
            <person name="Silva J.C."/>
            <person name="Vemulapalli V."/>
            <person name="Bedford M.T."/>
            <person name="Comb M.J."/>
        </authorList>
    </citation>
    <scope>METHYLATION [LARGE SCALE ANALYSIS] AT ARG-38</scope>
    <scope>IDENTIFICATION BY MASS SPECTROMETRY [LARGE SCALE ANALYSIS]</scope>
    <source>
        <tissue>Colon carcinoma</tissue>
    </source>
</reference>
<organism>
    <name type="scientific">Homo sapiens</name>
    <name type="common">Human</name>
    <dbReference type="NCBI Taxonomy" id="9606"/>
    <lineage>
        <taxon>Eukaryota</taxon>
        <taxon>Metazoa</taxon>
        <taxon>Chordata</taxon>
        <taxon>Craniata</taxon>
        <taxon>Vertebrata</taxon>
        <taxon>Euteleostomi</taxon>
        <taxon>Mammalia</taxon>
        <taxon>Eutheria</taxon>
        <taxon>Euarchontoglires</taxon>
        <taxon>Primates</taxon>
        <taxon>Haplorrhini</taxon>
        <taxon>Catarrhini</taxon>
        <taxon>Hominidae</taxon>
        <taxon>Homo</taxon>
    </lineage>
</organism>
<comment type="function">
    <text evidence="6 7 10 12 14">Probable lipid transporter involved in lipid countertransport between the endoplasmic reticulum and the plasma membrane. Its ability to bind phosphatidylserine, suggests that it specifically exchanges phosphatidylserine with phosphatidylinositol 4-phosphate (PI4P), delivering phosphatidylserine to the plasma membrane in exchange for PI4P (Probable) (PubMed:23934110). Plays a role in negative regulation of lipid biosynthesis (PubMed:19554302). Negatively regulates APOB secretion from hepatocytes (PubMed:19554302, PubMed:22906437). Binds cholesterol and acidic phospholipids (PubMed:22906437). Also binds 25-hydroxycholesterol (PubMed:17428193). Binds phosphatidylserine (PubMed:23934110).</text>
</comment>
<comment type="subunit">
    <text evidence="10 11">Interacts with OSBPL9 (PubMed:22906437). Interacts with DIAPH1 (PubMed:23325789).</text>
</comment>
<comment type="interaction">
    <interactant intactId="EBI-2511286">
        <id>Q9BXB5</id>
    </interactant>
    <interactant intactId="EBI-2511368">
        <id>Q96SU4</id>
        <label>OSBPL9</label>
    </interactant>
    <organismsDiffer>false</organismsDiffer>
    <experiments>3</experiments>
</comment>
<comment type="subcellular location">
    <subcellularLocation>
        <location evidence="7 10">Cytoplasm</location>
        <location evidence="7 10">Cytoskeleton</location>
    </subcellularLocation>
    <text evidence="7 10">Associates with microtubules.</text>
</comment>
<comment type="alternative products">
    <event type="alternative splicing"/>
    <isoform>
        <id>Q9BXB5-1</id>
        <name>1</name>
        <sequence type="displayed"/>
    </isoform>
    <isoform>
        <id>Q9BXB5-2</id>
        <name>2</name>
        <sequence type="described" ref="VSP_042930"/>
    </isoform>
</comment>
<comment type="domain">
    <text evidence="6 10">The C-terminal region binds cholesterol, 25-hydroxysterol and acidic phospholipids and is required for localization to microtubules.</text>
</comment>
<comment type="domain">
    <text evidence="10">The PH domain selectively interacts with phosphatidylinositol-4-phosphate.</text>
</comment>
<comment type="polymorphism">
    <text evidence="8 9">Polymorphisms are associated with dyslipidemia. Variant Asn-254 is associated with LDL-cholesterol levels in Japanese population (PubMed:20224571). Association with peripheral arterial disease has also been observed (PubMed:20610895).</text>
</comment>
<comment type="similarity">
    <text evidence="14">Belongs to the OSBP family.</text>
</comment>
<evidence type="ECO:0000250" key="1">
    <source>
        <dbReference type="UniProtKB" id="Q02201"/>
    </source>
</evidence>
<evidence type="ECO:0000250" key="2">
    <source>
        <dbReference type="UniProtKB" id="S4R1M9"/>
    </source>
</evidence>
<evidence type="ECO:0000255" key="3"/>
<evidence type="ECO:0000255" key="4">
    <source>
        <dbReference type="PROSITE-ProRule" id="PRU00145"/>
    </source>
</evidence>
<evidence type="ECO:0000256" key="5">
    <source>
        <dbReference type="SAM" id="MobiDB-lite"/>
    </source>
</evidence>
<evidence type="ECO:0000269" key="6">
    <source>
    </source>
</evidence>
<evidence type="ECO:0000269" key="7">
    <source>
    </source>
</evidence>
<evidence type="ECO:0000269" key="8">
    <source>
    </source>
</evidence>
<evidence type="ECO:0000269" key="9">
    <source>
    </source>
</evidence>
<evidence type="ECO:0000269" key="10">
    <source>
    </source>
</evidence>
<evidence type="ECO:0000269" key="11">
    <source>
    </source>
</evidence>
<evidence type="ECO:0000269" key="12">
    <source>
    </source>
</evidence>
<evidence type="ECO:0000303" key="13">
    <source>
    </source>
</evidence>
<evidence type="ECO:0000305" key="14"/>
<evidence type="ECO:0007744" key="15">
    <source>
    </source>
</evidence>
<evidence type="ECO:0007744" key="16">
    <source>
    </source>
</evidence>
<evidence type="ECO:0007744" key="17">
    <source>
    </source>
</evidence>
<evidence type="ECO:0007744" key="18">
    <source>
    </source>
</evidence>
<evidence type="ECO:0007744" key="19">
    <source>
    </source>
</evidence>
<evidence type="ECO:0007744" key="20">
    <source>
    </source>
</evidence>
<sequence length="764" mass="83970">MERAVQGTDGGGGSNSSSRSSSRATSAGSSPSCSLAGRGVSSRSAAAGLGGGGSRSSPGSVAASPSGGGGRRREPALEGVLSKYTNLLQGWQNRYFVLDFEAGILQYFVNEQSKHQKPRGVLSLSGAIVSLSDEAPHMLVVYSANGEMFKLRAADAKEKQFWVTQLRACAKYHMEMNSKSAPSSRSRSLTLLPHGTPNSASPCSQRHLSVGAPGVVTITHHKSPAAARRAKSQYSGQLHEVREMMNQVEGQQKNLVHAIESLPGSGPLTALDQDLLLLKATSAATLSCLGECLNLLQQSVHQAGQPSQKPGASENILGWHGSKSHSTEQLKNGTLGSLPSASANITWAILPNSAEDEQTSQPEPEPNSGSELVLSEDEKSDNEDKEETELGVMEDQRSIILHLISQLKLGMDLTKVVLPTFILEKRSLLEMYADFMAHPDLLLAITAGATPEERVICFVEYYLTAFHEGRKGALAKKPYNPIIGETFHCSWEVPKDRVKPKRTASRSPASCHEHPMADDPSKSYKLRFVAEQVSHHPPISCFYCECEEKRLCVNTHVWTKSKFMGMSVGVSMIGEGVLRLLEHGEEYVFTLPSAYARSILTIPWVELGGKVSINCAKTGYSATVIFHTKPFYGGKVHRVTAEVKHNPTNTIVCKAHGEWNGTLEFTYNNGETKVIDTTTLPVYPKKIRPLEKQGPMESRNLWREVTRYLRLGDIDAATEQKRHLEEKQRVEERKRENLRTPWKPKYFIQEGDGWVYFNPLWKAH</sequence>
<feature type="chain" id="PRO_0000100380" description="Oxysterol-binding protein-related protein 10">
    <location>
        <begin position="1"/>
        <end position="764"/>
    </location>
</feature>
<feature type="domain" description="PH" evidence="4">
    <location>
        <begin position="74"/>
        <end position="171"/>
    </location>
</feature>
<feature type="region of interest" description="Disordered" evidence="5">
    <location>
        <begin position="1"/>
        <end position="74"/>
    </location>
</feature>
<feature type="region of interest" description="Disordered" evidence="5">
    <location>
        <begin position="304"/>
        <end position="335"/>
    </location>
</feature>
<feature type="region of interest" description="Disordered" evidence="5">
    <location>
        <begin position="354"/>
        <end position="391"/>
    </location>
</feature>
<feature type="region of interest" description="Disordered" evidence="5">
    <location>
        <begin position="501"/>
        <end position="520"/>
    </location>
</feature>
<feature type="coiled-coil region" evidence="3">
    <location>
        <begin position="713"/>
        <end position="740"/>
    </location>
</feature>
<feature type="compositionally biased region" description="Low complexity" evidence="5">
    <location>
        <begin position="15"/>
        <end position="47"/>
    </location>
</feature>
<feature type="compositionally biased region" description="Low complexity" evidence="5">
    <location>
        <begin position="55"/>
        <end position="65"/>
    </location>
</feature>
<feature type="compositionally biased region" description="Polar residues" evidence="5">
    <location>
        <begin position="359"/>
        <end position="370"/>
    </location>
</feature>
<feature type="compositionally biased region" description="Acidic residues" evidence="5">
    <location>
        <begin position="374"/>
        <end position="389"/>
    </location>
</feature>
<feature type="compositionally biased region" description="Basic and acidic residues" evidence="5">
    <location>
        <begin position="511"/>
        <end position="520"/>
    </location>
</feature>
<feature type="binding site" evidence="1">
    <location>
        <begin position="413"/>
        <end position="418"/>
    </location>
    <ligand>
        <name>a 1,2-diacyl-sn-glycero-3-phospho-(1D-myo-inositol 4-phosphate)</name>
        <dbReference type="ChEBI" id="CHEBI:58178"/>
    </ligand>
</feature>
<feature type="binding site" evidence="1">
    <location>
        <begin position="413"/>
        <end position="418"/>
    </location>
    <ligand>
        <name>a 1,2-diacyl-sn-glycero-3-phospho-L-serine</name>
        <dbReference type="ChEBI" id="CHEBI:57262"/>
    </ligand>
</feature>
<feature type="binding site" evidence="1">
    <location>
        <begin position="477"/>
        <end position="480"/>
    </location>
    <ligand>
        <name>a 1,2-diacyl-sn-glycero-3-phospho-(1D-myo-inositol 4-phosphate)</name>
        <dbReference type="ChEBI" id="CHEBI:58178"/>
    </ligand>
</feature>
<feature type="binding site" evidence="1">
    <location>
        <position position="480"/>
    </location>
    <ligand>
        <name>a 1,2-diacyl-sn-glycero-3-phospho-L-serine</name>
        <dbReference type="ChEBI" id="CHEBI:57262"/>
    </ligand>
</feature>
<feature type="binding site" evidence="1">
    <location>
        <begin position="535"/>
        <end position="536"/>
    </location>
    <ligand>
        <name>a 1,2-diacyl-sn-glycero-3-phospho-(1D-myo-inositol 4-phosphate)</name>
        <dbReference type="ChEBI" id="CHEBI:58178"/>
    </ligand>
</feature>
<feature type="binding site" evidence="1">
    <location>
        <position position="561"/>
    </location>
    <ligand>
        <name>a 1,2-diacyl-sn-glycero-3-phospho-L-serine</name>
        <dbReference type="ChEBI" id="CHEBI:57262"/>
    </ligand>
</feature>
<feature type="binding site" evidence="1">
    <location>
        <position position="721"/>
    </location>
    <ligand>
        <name>a 1,2-diacyl-sn-glycero-3-phospho-(1D-myo-inositol 4-phosphate)</name>
        <dbReference type="ChEBI" id="CHEBI:58178"/>
    </ligand>
</feature>
<feature type="binding site" evidence="1">
    <location>
        <position position="725"/>
    </location>
    <ligand>
        <name>a 1,2-diacyl-sn-glycero-3-phospho-(1D-myo-inositol 4-phosphate)</name>
        <dbReference type="ChEBI" id="CHEBI:58178"/>
    </ligand>
</feature>
<feature type="binding site" evidence="1">
    <location>
        <position position="729"/>
    </location>
    <ligand>
        <name>a 1,2-diacyl-sn-glycero-3-phospho-(1D-myo-inositol 4-phosphate)</name>
        <dbReference type="ChEBI" id="CHEBI:58178"/>
    </ligand>
</feature>
<feature type="modified residue" description="Phosphoserine" evidence="2">
    <location>
        <position position="29"/>
    </location>
</feature>
<feature type="modified residue" description="Phosphoserine" evidence="19">
    <location>
        <position position="30"/>
    </location>
</feature>
<feature type="modified residue" description="Omega-N-methylarginine" evidence="20">
    <location>
        <position position="38"/>
    </location>
</feature>
<feature type="modified residue" description="Phosphoserine" evidence="16">
    <location>
        <position position="57"/>
    </location>
</feature>
<feature type="modified residue" description="Phosphoserine" evidence="16">
    <location>
        <position position="60"/>
    </location>
</feature>
<feature type="modified residue" description="Phosphoserine" evidence="15 16 19">
    <location>
        <position position="64"/>
    </location>
</feature>
<feature type="modified residue" description="Phosphothreonine" evidence="16">
    <location>
        <position position="196"/>
    </location>
</feature>
<feature type="modified residue" description="Phosphoserine" evidence="16">
    <location>
        <position position="201"/>
    </location>
</feature>
<feature type="modified residue" description="Phosphoserine" evidence="17 18 19">
    <location>
        <position position="209"/>
    </location>
</feature>
<feature type="modified residue" description="Phosphoserine" evidence="16 17 19">
    <location>
        <position position="223"/>
    </location>
</feature>
<feature type="splice variant" id="VSP_042930" description="In isoform 2." evidence="13">
    <location>
        <begin position="180"/>
        <end position="243"/>
    </location>
</feature>
<feature type="sequence variant" id="VAR_022100" description="In dbSNP:rs2290532.">
    <original>N</original>
    <variation>D</variation>
    <location>
        <position position="254"/>
    </location>
</feature>
<name>OSB10_HUMAN</name>